<comment type="function">
    <text evidence="4 7">Plays an important role in the regulation of embryonic development, cell proliferation and cell differentiation. Required for normal branching morphogenesis. Growth factor active on keratinocytes. Possible major paracrine effector of normal epithelial cell proliferation.</text>
</comment>
<comment type="subunit">
    <text evidence="3 4 7">Interacts with FGFBP1. Interacts with FGFR2. Affinity between fibroblast growth factors (FGFs) and their receptors is increased by heparan sulfate glycosaminoglycans that function as coreceptors.</text>
</comment>
<comment type="interaction">
    <interactant intactId="EBI-3937699">
        <id>P21781</id>
    </interactant>
    <interactant intactId="EBI-6354683">
        <id>P21802-3</id>
        <label>FGFR2</label>
    </interactant>
    <organismsDiffer>false</organismsDiffer>
    <experiments>2</experiments>
</comment>
<comment type="subcellular location">
    <subcellularLocation>
        <location>Secreted</location>
    </subcellularLocation>
</comment>
<comment type="alternative products">
    <event type="alternative splicing"/>
    <isoform>
        <id>P21781-1</id>
        <name>1</name>
        <sequence type="displayed"/>
    </isoform>
    <isoform>
        <id>P21781-2</id>
        <name>2</name>
        <sequence type="described" ref="VSP_055090"/>
    </isoform>
</comment>
<comment type="tissue specificity">
    <text>Epithelial cell.</text>
</comment>
<comment type="similarity">
    <text evidence="9">Belongs to the heparin-binding growth factors family.</text>
</comment>
<organism>
    <name type="scientific">Homo sapiens</name>
    <name type="common">Human</name>
    <dbReference type="NCBI Taxonomy" id="9606"/>
    <lineage>
        <taxon>Eukaryota</taxon>
        <taxon>Metazoa</taxon>
        <taxon>Chordata</taxon>
        <taxon>Craniata</taxon>
        <taxon>Vertebrata</taxon>
        <taxon>Euteleostomi</taxon>
        <taxon>Mammalia</taxon>
        <taxon>Eutheria</taxon>
        <taxon>Euarchontoglires</taxon>
        <taxon>Primates</taxon>
        <taxon>Haplorrhini</taxon>
        <taxon>Catarrhini</taxon>
        <taxon>Hominidae</taxon>
        <taxon>Homo</taxon>
    </lineage>
</organism>
<keyword id="KW-0025">Alternative splicing</keyword>
<keyword id="KW-0903">Direct protein sequencing</keyword>
<keyword id="KW-0325">Glycoprotein</keyword>
<keyword id="KW-0339">Growth factor</keyword>
<keyword id="KW-0358">Heparin-binding</keyword>
<keyword id="KW-0497">Mitogen</keyword>
<keyword id="KW-1267">Proteomics identification</keyword>
<keyword id="KW-1185">Reference proteome</keyword>
<keyword id="KW-0964">Secreted</keyword>
<keyword id="KW-0732">Signal</keyword>
<dbReference type="EMBL" id="M60828">
    <property type="protein sequence ID" value="AAA63210.1"/>
    <property type="molecule type" value="mRNA"/>
</dbReference>
<dbReference type="EMBL" id="S81661">
    <property type="protein sequence ID" value="AAB21431.1"/>
    <property type="molecule type" value="mRNA"/>
</dbReference>
<dbReference type="EMBL" id="AK313160">
    <property type="protein sequence ID" value="BAG35978.1"/>
    <property type="molecule type" value="mRNA"/>
</dbReference>
<dbReference type="EMBL" id="CR542002">
    <property type="protein sequence ID" value="CAG46799.1"/>
    <property type="molecule type" value="mRNA"/>
</dbReference>
<dbReference type="EMBL" id="AC022306">
    <property type="status" value="NOT_ANNOTATED_CDS"/>
    <property type="molecule type" value="Genomic_DNA"/>
</dbReference>
<dbReference type="EMBL" id="AC025919">
    <property type="status" value="NOT_ANNOTATED_CDS"/>
    <property type="molecule type" value="Genomic_DNA"/>
</dbReference>
<dbReference type="EMBL" id="CH471082">
    <property type="protein sequence ID" value="EAW77375.1"/>
    <property type="molecule type" value="Genomic_DNA"/>
</dbReference>
<dbReference type="EMBL" id="CH471082">
    <property type="protein sequence ID" value="EAW77376.1"/>
    <property type="molecule type" value="Genomic_DNA"/>
</dbReference>
<dbReference type="EMBL" id="BC010956">
    <property type="protein sequence ID" value="AAH10956.1"/>
    <property type="molecule type" value="mRNA"/>
</dbReference>
<dbReference type="CCDS" id="CCDS10131.1">
    <molecule id="P21781-1"/>
</dbReference>
<dbReference type="PIR" id="A36301">
    <property type="entry name" value="A36301"/>
</dbReference>
<dbReference type="PIR" id="B46289">
    <property type="entry name" value="B46289"/>
</dbReference>
<dbReference type="RefSeq" id="NP_002000.1">
    <molecule id="P21781-1"/>
    <property type="nucleotide sequence ID" value="NM_002009.4"/>
</dbReference>
<dbReference type="SMR" id="P21781"/>
<dbReference type="BioGRID" id="108543">
    <property type="interactions" value="5"/>
</dbReference>
<dbReference type="DIP" id="DIP-4010N"/>
<dbReference type="FunCoup" id="P21781">
    <property type="interactions" value="1059"/>
</dbReference>
<dbReference type="IntAct" id="P21781">
    <property type="interactions" value="5"/>
</dbReference>
<dbReference type="STRING" id="9606.ENSP00000267843"/>
<dbReference type="BindingDB" id="P21781"/>
<dbReference type="ChEMBL" id="CHEMBL3286071"/>
<dbReference type="GlyCosmos" id="P21781">
    <property type="glycosylation" value="1 site, No reported glycans"/>
</dbReference>
<dbReference type="GlyGen" id="P21781">
    <property type="glycosylation" value="2 sites, 1 O-linked glycan (1 site)"/>
</dbReference>
<dbReference type="iPTMnet" id="P21781"/>
<dbReference type="PhosphoSitePlus" id="P21781"/>
<dbReference type="BioMuta" id="FGF7"/>
<dbReference type="DMDM" id="122756"/>
<dbReference type="MassIVE" id="P21781"/>
<dbReference type="PaxDb" id="9606-ENSP00000267843"/>
<dbReference type="PeptideAtlas" id="P21781"/>
<dbReference type="ProteomicsDB" id="40695"/>
<dbReference type="ProteomicsDB" id="53903">
    <molecule id="P21781-1"/>
</dbReference>
<dbReference type="Antibodypedia" id="12143">
    <property type="antibodies" value="401 antibodies from 36 providers"/>
</dbReference>
<dbReference type="DNASU" id="2252"/>
<dbReference type="Ensembl" id="ENST00000267843.9">
    <molecule id="P21781-1"/>
    <property type="protein sequence ID" value="ENSP00000267843.4"/>
    <property type="gene ID" value="ENSG00000140285.12"/>
</dbReference>
<dbReference type="Ensembl" id="ENST00000560270.1">
    <molecule id="P21781-2"/>
    <property type="protein sequence ID" value="ENSP00000454205.1"/>
    <property type="gene ID" value="ENSG00000140285.12"/>
</dbReference>
<dbReference type="GeneID" id="2252"/>
<dbReference type="KEGG" id="hsa:2252"/>
<dbReference type="MANE-Select" id="ENST00000267843.9">
    <property type="protein sequence ID" value="ENSP00000267843.4"/>
    <property type="RefSeq nucleotide sequence ID" value="NM_002009.4"/>
    <property type="RefSeq protein sequence ID" value="NP_002000.1"/>
</dbReference>
<dbReference type="UCSC" id="uc001zxn.3">
    <molecule id="P21781-1"/>
    <property type="organism name" value="human"/>
</dbReference>
<dbReference type="AGR" id="HGNC:3685"/>
<dbReference type="CTD" id="2252"/>
<dbReference type="DisGeNET" id="2252"/>
<dbReference type="GeneCards" id="FGF7"/>
<dbReference type="HGNC" id="HGNC:3685">
    <property type="gene designation" value="FGF7"/>
</dbReference>
<dbReference type="HPA" id="ENSG00000140285">
    <property type="expression patterns" value="Tissue enhanced (urinary)"/>
</dbReference>
<dbReference type="MIM" id="148180">
    <property type="type" value="gene"/>
</dbReference>
<dbReference type="neXtProt" id="NX_P21781"/>
<dbReference type="OpenTargets" id="ENSG00000140285"/>
<dbReference type="PharmGKB" id="PA28124"/>
<dbReference type="VEuPathDB" id="HostDB:ENSG00000140285"/>
<dbReference type="eggNOG" id="KOG3885">
    <property type="taxonomic scope" value="Eukaryota"/>
</dbReference>
<dbReference type="GeneTree" id="ENSGT00940000159843"/>
<dbReference type="HOGENOM" id="CLU_081609_3_1_1"/>
<dbReference type="InParanoid" id="P21781"/>
<dbReference type="OMA" id="QYYICMN"/>
<dbReference type="OrthoDB" id="5987799at2759"/>
<dbReference type="PAN-GO" id="P21781">
    <property type="GO annotations" value="14 GO annotations based on evolutionary models"/>
</dbReference>
<dbReference type="PhylomeDB" id="P21781"/>
<dbReference type="TreeFam" id="TF317805"/>
<dbReference type="PathwayCommons" id="P21781"/>
<dbReference type="Reactome" id="R-HSA-109704">
    <property type="pathway name" value="PI3K Cascade"/>
</dbReference>
<dbReference type="Reactome" id="R-HSA-1257604">
    <property type="pathway name" value="PIP3 activates AKT signaling"/>
</dbReference>
<dbReference type="Reactome" id="R-HSA-190377">
    <property type="pathway name" value="FGFR2b ligand binding and activation"/>
</dbReference>
<dbReference type="Reactome" id="R-HSA-2033519">
    <property type="pathway name" value="Activated point mutants of FGFR2"/>
</dbReference>
<dbReference type="Reactome" id="R-HSA-2219530">
    <property type="pathway name" value="Constitutive Signaling by Aberrant PI3K in Cancer"/>
</dbReference>
<dbReference type="Reactome" id="R-HSA-5654221">
    <property type="pathway name" value="Phospholipase C-mediated cascade, FGFR2"/>
</dbReference>
<dbReference type="Reactome" id="R-HSA-5654695">
    <property type="pathway name" value="PI-3K cascade:FGFR2"/>
</dbReference>
<dbReference type="Reactome" id="R-HSA-5654699">
    <property type="pathway name" value="SHC-mediated cascade:FGFR2"/>
</dbReference>
<dbReference type="Reactome" id="R-HSA-5654700">
    <property type="pathway name" value="FRS-mediated FGFR2 signaling"/>
</dbReference>
<dbReference type="Reactome" id="R-HSA-5654727">
    <property type="pathway name" value="Negative regulation of FGFR2 signaling"/>
</dbReference>
<dbReference type="Reactome" id="R-HSA-5655253">
    <property type="pathway name" value="Signaling by FGFR2 in disease"/>
</dbReference>
<dbReference type="Reactome" id="R-HSA-5673001">
    <property type="pathway name" value="RAF/MAP kinase cascade"/>
</dbReference>
<dbReference type="Reactome" id="R-HSA-6811558">
    <property type="pathway name" value="PI5P, PP2A and IER3 Regulate PI3K/AKT Signaling"/>
</dbReference>
<dbReference type="Reactome" id="R-HSA-9925561">
    <property type="pathway name" value="Developmental Lineage of Pancreatic Acinar Cells"/>
</dbReference>
<dbReference type="SignaLink" id="P21781"/>
<dbReference type="SIGNOR" id="P21781"/>
<dbReference type="BioGRID-ORCS" id="2252">
    <property type="hits" value="13 hits in 1138 CRISPR screens"/>
</dbReference>
<dbReference type="GeneWiki" id="FGF7"/>
<dbReference type="GenomeRNAi" id="2252"/>
<dbReference type="Pharos" id="P21781">
    <property type="development level" value="Tbio"/>
</dbReference>
<dbReference type="PRO" id="PR:P21781"/>
<dbReference type="Proteomes" id="UP000005640">
    <property type="component" value="Chromosome 15"/>
</dbReference>
<dbReference type="RNAct" id="P21781">
    <property type="molecule type" value="protein"/>
</dbReference>
<dbReference type="Bgee" id="ENSG00000140285">
    <property type="expression patterns" value="Expressed in calcaneal tendon and 130 other cell types or tissues"/>
</dbReference>
<dbReference type="ExpressionAtlas" id="P21781">
    <property type="expression patterns" value="baseline and differential"/>
</dbReference>
<dbReference type="GO" id="GO:0005737">
    <property type="term" value="C:cytoplasm"/>
    <property type="evidence" value="ECO:0000318"/>
    <property type="project" value="GO_Central"/>
</dbReference>
<dbReference type="GO" id="GO:0005576">
    <property type="term" value="C:extracellular region"/>
    <property type="evidence" value="ECO:0000304"/>
    <property type="project" value="Reactome"/>
</dbReference>
<dbReference type="GO" id="GO:0005615">
    <property type="term" value="C:extracellular space"/>
    <property type="evidence" value="ECO:0000318"/>
    <property type="project" value="GO_Central"/>
</dbReference>
<dbReference type="GO" id="GO:0098982">
    <property type="term" value="C:GABA-ergic synapse"/>
    <property type="evidence" value="ECO:0007669"/>
    <property type="project" value="Ensembl"/>
</dbReference>
<dbReference type="GO" id="GO:0005794">
    <property type="term" value="C:Golgi apparatus"/>
    <property type="evidence" value="ECO:0007669"/>
    <property type="project" value="Ensembl"/>
</dbReference>
<dbReference type="GO" id="GO:0098794">
    <property type="term" value="C:postsynapse"/>
    <property type="evidence" value="ECO:0007669"/>
    <property type="project" value="Ensembl"/>
</dbReference>
<dbReference type="GO" id="GO:0042056">
    <property type="term" value="F:chemoattractant activity"/>
    <property type="evidence" value="ECO:0000314"/>
    <property type="project" value="UniProtKB"/>
</dbReference>
<dbReference type="GO" id="GO:0008083">
    <property type="term" value="F:growth factor activity"/>
    <property type="evidence" value="ECO:0000318"/>
    <property type="project" value="GO_Central"/>
</dbReference>
<dbReference type="GO" id="GO:0008201">
    <property type="term" value="F:heparin binding"/>
    <property type="evidence" value="ECO:0007669"/>
    <property type="project" value="UniProtKB-KW"/>
</dbReference>
<dbReference type="GO" id="GO:0005111">
    <property type="term" value="F:type 2 fibroblast growth factor receptor binding"/>
    <property type="evidence" value="ECO:0000318"/>
    <property type="project" value="GO_Central"/>
</dbReference>
<dbReference type="GO" id="GO:0030036">
    <property type="term" value="P:actin cytoskeleton organization"/>
    <property type="evidence" value="ECO:0000314"/>
    <property type="project" value="UniProtKB"/>
</dbReference>
<dbReference type="GO" id="GO:0060445">
    <property type="term" value="P:branching involved in salivary gland morphogenesis"/>
    <property type="evidence" value="ECO:0007669"/>
    <property type="project" value="Ensembl"/>
</dbReference>
<dbReference type="GO" id="GO:0001935">
    <property type="term" value="P:endothelial cell proliferation"/>
    <property type="evidence" value="ECO:0007669"/>
    <property type="project" value="Ensembl"/>
</dbReference>
<dbReference type="GO" id="GO:0008544">
    <property type="term" value="P:epidermis development"/>
    <property type="evidence" value="ECO:0000304"/>
    <property type="project" value="ProtInc"/>
</dbReference>
<dbReference type="GO" id="GO:0008543">
    <property type="term" value="P:fibroblast growth factor receptor signaling pathway"/>
    <property type="evidence" value="ECO:0000316"/>
    <property type="project" value="MGI"/>
</dbReference>
<dbReference type="GO" id="GO:0031069">
    <property type="term" value="P:hair follicle morphogenesis"/>
    <property type="evidence" value="ECO:0007669"/>
    <property type="project" value="Ensembl"/>
</dbReference>
<dbReference type="GO" id="GO:0030324">
    <property type="term" value="P:lung development"/>
    <property type="evidence" value="ECO:0000318"/>
    <property type="project" value="GO_Central"/>
</dbReference>
<dbReference type="GO" id="GO:0010463">
    <property type="term" value="P:mesenchymal cell proliferation"/>
    <property type="evidence" value="ECO:0000314"/>
    <property type="project" value="UniProtKB"/>
</dbReference>
<dbReference type="GO" id="GO:0051450">
    <property type="term" value="P:myoblast proliferation"/>
    <property type="evidence" value="ECO:0007669"/>
    <property type="project" value="Ensembl"/>
</dbReference>
<dbReference type="GO" id="GO:0022008">
    <property type="term" value="P:neurogenesis"/>
    <property type="evidence" value="ECO:0000318"/>
    <property type="project" value="GO_Central"/>
</dbReference>
<dbReference type="GO" id="GO:0050918">
    <property type="term" value="P:positive chemotaxis"/>
    <property type="evidence" value="ECO:0000314"/>
    <property type="project" value="UniProtKB"/>
</dbReference>
<dbReference type="GO" id="GO:0051781">
    <property type="term" value="P:positive regulation of cell division"/>
    <property type="evidence" value="ECO:0007669"/>
    <property type="project" value="UniProtKB-KW"/>
</dbReference>
<dbReference type="GO" id="GO:0008284">
    <property type="term" value="P:positive regulation of cell population proliferation"/>
    <property type="evidence" value="ECO:0000316"/>
    <property type="project" value="MGI"/>
</dbReference>
<dbReference type="GO" id="GO:0045893">
    <property type="term" value="P:positive regulation of DNA-templated transcription"/>
    <property type="evidence" value="ECO:0007669"/>
    <property type="project" value="Ensembl"/>
</dbReference>
<dbReference type="GO" id="GO:0001938">
    <property type="term" value="P:positive regulation of endothelial cell proliferation"/>
    <property type="evidence" value="ECO:0007669"/>
    <property type="project" value="Ensembl"/>
</dbReference>
<dbReference type="GO" id="GO:0050679">
    <property type="term" value="P:positive regulation of epithelial cell proliferation"/>
    <property type="evidence" value="ECO:0000314"/>
    <property type="project" value="UniProtKB"/>
</dbReference>
<dbReference type="GO" id="GO:0060501">
    <property type="term" value="P:positive regulation of epithelial cell proliferation involved in lung morphogenesis"/>
    <property type="evidence" value="ECO:0000314"/>
    <property type="project" value="MGI"/>
</dbReference>
<dbReference type="GO" id="GO:0051549">
    <property type="term" value="P:positive regulation of keratinocyte migration"/>
    <property type="evidence" value="ECO:0000314"/>
    <property type="project" value="UniProtKB"/>
</dbReference>
<dbReference type="GO" id="GO:0010838">
    <property type="term" value="P:positive regulation of keratinocyte proliferation"/>
    <property type="evidence" value="ECO:0000314"/>
    <property type="project" value="UniProtKB"/>
</dbReference>
<dbReference type="GO" id="GO:0043410">
    <property type="term" value="P:positive regulation of MAPK cascade"/>
    <property type="evidence" value="ECO:0000318"/>
    <property type="project" value="GO_Central"/>
</dbReference>
<dbReference type="GO" id="GO:2000288">
    <property type="term" value="P:positive regulation of myoblast proliferation"/>
    <property type="evidence" value="ECO:0007669"/>
    <property type="project" value="Ensembl"/>
</dbReference>
<dbReference type="GO" id="GO:0050731">
    <property type="term" value="P:positive regulation of peptidyl-tyrosine phosphorylation"/>
    <property type="evidence" value="ECO:0000314"/>
    <property type="project" value="UniProtKB"/>
</dbReference>
<dbReference type="GO" id="GO:0034394">
    <property type="term" value="P:protein localization to cell surface"/>
    <property type="evidence" value="ECO:0000314"/>
    <property type="project" value="UniProtKB"/>
</dbReference>
<dbReference type="GO" id="GO:0060665">
    <property type="term" value="P:regulation of branching involved in salivary gland morphogenesis by mesenchymal-epithelial signaling"/>
    <property type="evidence" value="ECO:0007669"/>
    <property type="project" value="Ensembl"/>
</dbReference>
<dbReference type="GO" id="GO:0030334">
    <property type="term" value="P:regulation of cell migration"/>
    <property type="evidence" value="ECO:0000318"/>
    <property type="project" value="GO_Central"/>
</dbReference>
<dbReference type="GO" id="GO:0090128">
    <property type="term" value="P:regulation of synapse maturation"/>
    <property type="evidence" value="ECO:0007669"/>
    <property type="project" value="Ensembl"/>
</dbReference>
<dbReference type="GO" id="GO:0009611">
    <property type="term" value="P:response to wounding"/>
    <property type="evidence" value="ECO:0000304"/>
    <property type="project" value="ProtInc"/>
</dbReference>
<dbReference type="GO" id="GO:0061033">
    <property type="term" value="P:secretion by lung epithelial cell involved in lung growth"/>
    <property type="evidence" value="ECO:0000314"/>
    <property type="project" value="UniProtKB"/>
</dbReference>
<dbReference type="GO" id="GO:0007165">
    <property type="term" value="P:signal transduction"/>
    <property type="evidence" value="ECO:0000303"/>
    <property type="project" value="ProtInc"/>
</dbReference>
<dbReference type="CDD" id="cd23319">
    <property type="entry name" value="beta-trefoil_FGF7"/>
    <property type="match status" value="1"/>
</dbReference>
<dbReference type="FunFam" id="2.80.10.50:FF:000004">
    <property type="entry name" value="Fibroblast growth factor"/>
    <property type="match status" value="1"/>
</dbReference>
<dbReference type="Gene3D" id="2.80.10.50">
    <property type="match status" value="1"/>
</dbReference>
<dbReference type="InterPro" id="IPR002209">
    <property type="entry name" value="Fibroblast_GF_fam"/>
</dbReference>
<dbReference type="InterPro" id="IPR008996">
    <property type="entry name" value="IL1/FGF"/>
</dbReference>
<dbReference type="PANTHER" id="PTHR11486">
    <property type="entry name" value="FIBROBLAST GROWTH FACTOR"/>
    <property type="match status" value="1"/>
</dbReference>
<dbReference type="Pfam" id="PF00167">
    <property type="entry name" value="FGF"/>
    <property type="match status" value="1"/>
</dbReference>
<dbReference type="PRINTS" id="PR00263">
    <property type="entry name" value="HBGFFGF"/>
</dbReference>
<dbReference type="PRINTS" id="PR00262">
    <property type="entry name" value="IL1HBGF"/>
</dbReference>
<dbReference type="SMART" id="SM00442">
    <property type="entry name" value="FGF"/>
    <property type="match status" value="1"/>
</dbReference>
<dbReference type="SUPFAM" id="SSF50353">
    <property type="entry name" value="Cytokine"/>
    <property type="match status" value="1"/>
</dbReference>
<dbReference type="PROSITE" id="PS00247">
    <property type="entry name" value="HBGF_FGF"/>
    <property type="match status" value="1"/>
</dbReference>
<name>FGF7_HUMAN</name>
<feature type="signal peptide" evidence="5 6">
    <location>
        <begin position="1"/>
        <end position="31"/>
    </location>
</feature>
<feature type="chain" id="PRO_0000008965" description="Fibroblast growth factor 7">
    <location>
        <begin position="32"/>
        <end position="194"/>
    </location>
</feature>
<feature type="glycosylation site" description="N-linked (GlcNAc...) asparagine" evidence="1">
    <location>
        <position position="45"/>
    </location>
</feature>
<feature type="splice variant" id="VSP_055090" description="In isoform 2." evidence="8">
    <original>NIMEIRTVAVGIVAIKGVESEFYLAMNKEGKLYAKKECNEDCNFKELILENHYNTYASAKWTHNGGEMFVALNQKGIPVRGKKTKKEQKTAHFLPMAIT</original>
    <variation>SK</variation>
    <location>
        <begin position="96"/>
        <end position="194"/>
    </location>
</feature>
<feature type="sequence variant" id="VAR_049063" description="In dbSNP:rs34531231.">
    <original>M</original>
    <variation>T</variation>
    <location>
        <position position="59"/>
    </location>
</feature>
<feature type="sequence variant" id="VAR_071038" description="In dbSNP:rs17850705." evidence="2">
    <original>G</original>
    <variation>E</variation>
    <location>
        <position position="62"/>
    </location>
</feature>
<protein>
    <recommendedName>
        <fullName>Fibroblast growth factor 7</fullName>
        <shortName>FGF-7</shortName>
    </recommendedName>
    <alternativeName>
        <fullName>Heparin-binding growth factor 7</fullName>
        <shortName>HBGF-7</shortName>
    </alternativeName>
    <alternativeName>
        <fullName>Keratinocyte growth factor</fullName>
    </alternativeName>
</protein>
<evidence type="ECO:0000255" key="1"/>
<evidence type="ECO:0000269" key="2">
    <source>
    </source>
</evidence>
<evidence type="ECO:0000269" key="3">
    <source>
    </source>
</evidence>
<evidence type="ECO:0000269" key="4">
    <source>
    </source>
</evidence>
<evidence type="ECO:0000269" key="5">
    <source>
    </source>
</evidence>
<evidence type="ECO:0000269" key="6">
    <source>
    </source>
</evidence>
<evidence type="ECO:0000269" key="7">
    <source>
    </source>
</evidence>
<evidence type="ECO:0000303" key="8">
    <source>
    </source>
</evidence>
<evidence type="ECO:0000305" key="9"/>
<proteinExistence type="evidence at protein level"/>
<accession>P21781</accession>
<accession>H0YNY5</accession>
<accession>Q6FGV5</accession>
<accession>Q96FG5</accession>
<sequence>MHKWILTWILPTLLYRSCFHIICLVGTISLACNDMTPEQMATNVNCSSPERHTRSYDYMEGGDIRVRRLFCRTQWYLRIDKRGKVKGTQEMKNNYNIMEIRTVAVGIVAIKGVESEFYLAMNKEGKLYAKKECNEDCNFKELILENHYNTYASAKWTHNGGEMFVALNQKGIPVRGKKTKKEQKTAHFLPMAIT</sequence>
<gene>
    <name type="primary">FGF7</name>
    <name type="synonym">KGF</name>
</gene>
<reference key="1">
    <citation type="journal article" date="1989" name="Science">
        <title>Human KGF is FGF-related with properties of a paracrine effector of epithelial cell growth.</title>
        <authorList>
            <person name="Finch P.W."/>
            <person name="Rubin J.S."/>
            <person name="Miki T."/>
            <person name="Ron D."/>
            <person name="Aaronson S.A."/>
        </authorList>
    </citation>
    <scope>NUCLEOTIDE SEQUENCE [MRNA] (ISOFORM 1)</scope>
    <scope>PROTEIN SEQUENCE OF 32-50</scope>
</reference>
<reference key="2">
    <citation type="journal article" date="1991" name="Ann. N. Y. Acad. Sci.">
        <title>Keratinocyte growth factor. A fibroblast growth factor family member with unusual target cell specificity.</title>
        <authorList>
            <person name="Aaronson S.A."/>
            <person name="Bottaro D.P."/>
            <person name="Miki T."/>
            <person name="Ron D."/>
            <person name="Finch P.W."/>
            <person name="Fleming T.P."/>
            <person name="Ahn J."/>
            <person name="Taylor W.G."/>
            <person name="Rubin J.S."/>
        </authorList>
    </citation>
    <scope>NUCLEOTIDE SEQUENCE [MRNA] (ISOFORM 1)</scope>
</reference>
<reference key="3">
    <citation type="journal article" date="2004" name="Nat. Genet.">
        <title>Complete sequencing and characterization of 21,243 full-length human cDNAs.</title>
        <authorList>
            <person name="Ota T."/>
            <person name="Suzuki Y."/>
            <person name="Nishikawa T."/>
            <person name="Otsuki T."/>
            <person name="Sugiyama T."/>
            <person name="Irie R."/>
            <person name="Wakamatsu A."/>
            <person name="Hayashi K."/>
            <person name="Sato H."/>
            <person name="Nagai K."/>
            <person name="Kimura K."/>
            <person name="Makita H."/>
            <person name="Sekine M."/>
            <person name="Obayashi M."/>
            <person name="Nishi T."/>
            <person name="Shibahara T."/>
            <person name="Tanaka T."/>
            <person name="Ishii S."/>
            <person name="Yamamoto J."/>
            <person name="Saito K."/>
            <person name="Kawai Y."/>
            <person name="Isono Y."/>
            <person name="Nakamura Y."/>
            <person name="Nagahari K."/>
            <person name="Murakami K."/>
            <person name="Yasuda T."/>
            <person name="Iwayanagi T."/>
            <person name="Wagatsuma M."/>
            <person name="Shiratori A."/>
            <person name="Sudo H."/>
            <person name="Hosoiri T."/>
            <person name="Kaku Y."/>
            <person name="Kodaira H."/>
            <person name="Kondo H."/>
            <person name="Sugawara M."/>
            <person name="Takahashi M."/>
            <person name="Kanda K."/>
            <person name="Yokoi T."/>
            <person name="Furuya T."/>
            <person name="Kikkawa E."/>
            <person name="Omura Y."/>
            <person name="Abe K."/>
            <person name="Kamihara K."/>
            <person name="Katsuta N."/>
            <person name="Sato K."/>
            <person name="Tanikawa M."/>
            <person name="Yamazaki M."/>
            <person name="Ninomiya K."/>
            <person name="Ishibashi T."/>
            <person name="Yamashita H."/>
            <person name="Murakawa K."/>
            <person name="Fujimori K."/>
            <person name="Tanai H."/>
            <person name="Kimata M."/>
            <person name="Watanabe M."/>
            <person name="Hiraoka S."/>
            <person name="Chiba Y."/>
            <person name="Ishida S."/>
            <person name="Ono Y."/>
            <person name="Takiguchi S."/>
            <person name="Watanabe S."/>
            <person name="Yosida M."/>
            <person name="Hotuta T."/>
            <person name="Kusano J."/>
            <person name="Kanehori K."/>
            <person name="Takahashi-Fujii A."/>
            <person name="Hara H."/>
            <person name="Tanase T.-O."/>
            <person name="Nomura Y."/>
            <person name="Togiya S."/>
            <person name="Komai F."/>
            <person name="Hara R."/>
            <person name="Takeuchi K."/>
            <person name="Arita M."/>
            <person name="Imose N."/>
            <person name="Musashino K."/>
            <person name="Yuuki H."/>
            <person name="Oshima A."/>
            <person name="Sasaki N."/>
            <person name="Aotsuka S."/>
            <person name="Yoshikawa Y."/>
            <person name="Matsunawa H."/>
            <person name="Ichihara T."/>
            <person name="Shiohata N."/>
            <person name="Sano S."/>
            <person name="Moriya S."/>
            <person name="Momiyama H."/>
            <person name="Satoh N."/>
            <person name="Takami S."/>
            <person name="Terashima Y."/>
            <person name="Suzuki O."/>
            <person name="Nakagawa S."/>
            <person name="Senoh A."/>
            <person name="Mizoguchi H."/>
            <person name="Goto Y."/>
            <person name="Shimizu F."/>
            <person name="Wakebe H."/>
            <person name="Hishigaki H."/>
            <person name="Watanabe T."/>
            <person name="Sugiyama A."/>
            <person name="Takemoto M."/>
            <person name="Kawakami B."/>
            <person name="Yamazaki M."/>
            <person name="Watanabe K."/>
            <person name="Kumagai A."/>
            <person name="Itakura S."/>
            <person name="Fukuzumi Y."/>
            <person name="Fujimori Y."/>
            <person name="Komiyama M."/>
            <person name="Tashiro H."/>
            <person name="Tanigami A."/>
            <person name="Fujiwara T."/>
            <person name="Ono T."/>
            <person name="Yamada K."/>
            <person name="Fujii Y."/>
            <person name="Ozaki K."/>
            <person name="Hirao M."/>
            <person name="Ohmori Y."/>
            <person name="Kawabata A."/>
            <person name="Hikiji T."/>
            <person name="Kobatake N."/>
            <person name="Inagaki H."/>
            <person name="Ikema Y."/>
            <person name="Okamoto S."/>
            <person name="Okitani R."/>
            <person name="Kawakami T."/>
            <person name="Noguchi S."/>
            <person name="Itoh T."/>
            <person name="Shigeta K."/>
            <person name="Senba T."/>
            <person name="Matsumura K."/>
            <person name="Nakajima Y."/>
            <person name="Mizuno T."/>
            <person name="Morinaga M."/>
            <person name="Sasaki M."/>
            <person name="Togashi T."/>
            <person name="Oyama M."/>
            <person name="Hata H."/>
            <person name="Watanabe M."/>
            <person name="Komatsu T."/>
            <person name="Mizushima-Sugano J."/>
            <person name="Satoh T."/>
            <person name="Shirai Y."/>
            <person name="Takahashi Y."/>
            <person name="Nakagawa K."/>
            <person name="Okumura K."/>
            <person name="Nagase T."/>
            <person name="Nomura N."/>
            <person name="Kikuchi H."/>
            <person name="Masuho Y."/>
            <person name="Yamashita R."/>
            <person name="Nakai K."/>
            <person name="Yada T."/>
            <person name="Nakamura Y."/>
            <person name="Ohara O."/>
            <person name="Isogai T."/>
            <person name="Sugano S."/>
        </authorList>
    </citation>
    <scope>NUCLEOTIDE SEQUENCE [LARGE SCALE MRNA] (ISOFORM 1)</scope>
</reference>
<reference key="4">
    <citation type="submission" date="2004-06" db="EMBL/GenBank/DDBJ databases">
        <title>Cloning of human full open reading frames in Gateway(TM) system entry vector (pDONR201).</title>
        <authorList>
            <person name="Ebert L."/>
            <person name="Schick M."/>
            <person name="Neubert P."/>
            <person name="Schatten R."/>
            <person name="Henze S."/>
            <person name="Korn B."/>
        </authorList>
    </citation>
    <scope>NUCLEOTIDE SEQUENCE [LARGE SCALE MRNA] (ISOFORM 1)</scope>
</reference>
<reference key="5">
    <citation type="journal article" date="2006" name="Nature">
        <title>Analysis of the DNA sequence and duplication history of human chromosome 15.</title>
        <authorList>
            <person name="Zody M.C."/>
            <person name="Garber M."/>
            <person name="Sharpe T."/>
            <person name="Young S.K."/>
            <person name="Rowen L."/>
            <person name="O'Neill K."/>
            <person name="Whittaker C.A."/>
            <person name="Kamal M."/>
            <person name="Chang J.L."/>
            <person name="Cuomo C.A."/>
            <person name="Dewar K."/>
            <person name="FitzGerald M.G."/>
            <person name="Kodira C.D."/>
            <person name="Madan A."/>
            <person name="Qin S."/>
            <person name="Yang X."/>
            <person name="Abbasi N."/>
            <person name="Abouelleil A."/>
            <person name="Arachchi H.M."/>
            <person name="Baradarani L."/>
            <person name="Birditt B."/>
            <person name="Bloom S."/>
            <person name="Bloom T."/>
            <person name="Borowsky M.L."/>
            <person name="Burke J."/>
            <person name="Butler J."/>
            <person name="Cook A."/>
            <person name="DeArellano K."/>
            <person name="DeCaprio D."/>
            <person name="Dorris L. III"/>
            <person name="Dors M."/>
            <person name="Eichler E.E."/>
            <person name="Engels R."/>
            <person name="Fahey J."/>
            <person name="Fleetwood P."/>
            <person name="Friedman C."/>
            <person name="Gearin G."/>
            <person name="Hall J.L."/>
            <person name="Hensley G."/>
            <person name="Johnson E."/>
            <person name="Jones C."/>
            <person name="Kamat A."/>
            <person name="Kaur A."/>
            <person name="Locke D.P."/>
            <person name="Madan A."/>
            <person name="Munson G."/>
            <person name="Jaffe D.B."/>
            <person name="Lui A."/>
            <person name="Macdonald P."/>
            <person name="Mauceli E."/>
            <person name="Naylor J.W."/>
            <person name="Nesbitt R."/>
            <person name="Nicol R."/>
            <person name="O'Leary S.B."/>
            <person name="Ratcliffe A."/>
            <person name="Rounsley S."/>
            <person name="She X."/>
            <person name="Sneddon K.M.B."/>
            <person name="Stewart S."/>
            <person name="Sougnez C."/>
            <person name="Stone S.M."/>
            <person name="Topham K."/>
            <person name="Vincent D."/>
            <person name="Wang S."/>
            <person name="Zimmer A.R."/>
            <person name="Birren B.W."/>
            <person name="Hood L."/>
            <person name="Lander E.S."/>
            <person name="Nusbaum C."/>
        </authorList>
    </citation>
    <scope>NUCLEOTIDE SEQUENCE [LARGE SCALE GENOMIC DNA]</scope>
</reference>
<reference key="6">
    <citation type="submission" date="2005-07" db="EMBL/GenBank/DDBJ databases">
        <authorList>
            <person name="Mural R.J."/>
            <person name="Istrail S."/>
            <person name="Sutton G."/>
            <person name="Florea L."/>
            <person name="Halpern A.L."/>
            <person name="Mobarry C.M."/>
            <person name="Lippert R."/>
            <person name="Walenz B."/>
            <person name="Shatkay H."/>
            <person name="Dew I."/>
            <person name="Miller J.R."/>
            <person name="Flanigan M.J."/>
            <person name="Edwards N.J."/>
            <person name="Bolanos R."/>
            <person name="Fasulo D."/>
            <person name="Halldorsson B.V."/>
            <person name="Hannenhalli S."/>
            <person name="Turner R."/>
            <person name="Yooseph S."/>
            <person name="Lu F."/>
            <person name="Nusskern D.R."/>
            <person name="Shue B.C."/>
            <person name="Zheng X.H."/>
            <person name="Zhong F."/>
            <person name="Delcher A.L."/>
            <person name="Huson D.H."/>
            <person name="Kravitz S.A."/>
            <person name="Mouchard L."/>
            <person name="Reinert K."/>
            <person name="Remington K.A."/>
            <person name="Clark A.G."/>
            <person name="Waterman M.S."/>
            <person name="Eichler E.E."/>
            <person name="Adams M.D."/>
            <person name="Hunkapiller M.W."/>
            <person name="Myers E.W."/>
            <person name="Venter J.C."/>
        </authorList>
    </citation>
    <scope>NUCLEOTIDE SEQUENCE [LARGE SCALE GENOMIC DNA]</scope>
</reference>
<reference key="7">
    <citation type="journal article" date="2004" name="Genome Res.">
        <title>The status, quality, and expansion of the NIH full-length cDNA project: the Mammalian Gene Collection (MGC).</title>
        <authorList>
            <consortium name="The MGC Project Team"/>
        </authorList>
    </citation>
    <scope>NUCLEOTIDE SEQUENCE [LARGE SCALE MRNA] (ISOFORM 2)</scope>
    <scope>VARIANT GLU-62</scope>
    <source>
        <tissue>Brain</tissue>
    </source>
</reference>
<reference key="8">
    <citation type="journal article" date="1989" name="Proc. Natl. Acad. Sci. U.S.A.">
        <title>Purification and characterization of a newly identified growth factor specific for epithelial cells.</title>
        <authorList>
            <person name="Rubin J.S."/>
            <person name="Osada H."/>
            <person name="Finch P.W."/>
            <person name="Taylor W.G."/>
            <person name="Rudikoff S."/>
            <person name="Aaronson S.A."/>
        </authorList>
    </citation>
    <scope>PROTEIN SEQUENCE OF 32-44</scope>
</reference>
<reference key="9">
    <citation type="journal article" date="1996" name="J. Biol. Chem.">
        <title>Receptor specificity of the fibroblast growth factor family.</title>
        <authorList>
            <person name="Ornitz D.M."/>
            <person name="Xu J."/>
            <person name="Colvin J.S."/>
            <person name="McEwen D.G."/>
            <person name="MacArthur C.A."/>
            <person name="Coulier F."/>
            <person name="Gao G."/>
            <person name="Goldfarb M."/>
        </authorList>
    </citation>
    <scope>INTERACTION WITH FGFR2</scope>
    <scope>FUNCTION IN CELL PROLIFERATION</scope>
</reference>
<reference key="10">
    <citation type="journal article" date="2005" name="Oncogene">
        <title>The fibroblast growth factor binding protein is a novel interaction partner of FGF-7, FGF-10 and FGF-22 and regulates FGF activity: implications for epithelial repair.</title>
        <authorList>
            <person name="Beer H.-D."/>
            <person name="Bittner M."/>
            <person name="Niklaus G."/>
            <person name="Munding C."/>
            <person name="Max N."/>
            <person name="Goppelt A."/>
            <person name="Werner S."/>
        </authorList>
    </citation>
    <scope>INTERACTION WITH FGFBP1</scope>
</reference>
<reference key="11">
    <citation type="journal article" date="2006" name="J. Biol. Chem.">
        <title>Receptor specificity of the fibroblast growth factor family. The complete mammalian FGF family.</title>
        <authorList>
            <person name="Zhang X."/>
            <person name="Ibrahimi O.A."/>
            <person name="Olsen S.K."/>
            <person name="Umemori H."/>
            <person name="Mohammadi M."/>
            <person name="Ornitz D.M."/>
        </authorList>
    </citation>
    <scope>INTERACTION WITH FGFR2</scope>
    <scope>FUNCTION IN STIMULATION OF CELL PROLIFERATION</scope>
</reference>
<reference key="12">
    <citation type="journal article" date="2010" name="Nat. Rev. Cancer">
        <title>Fibroblast growth factor signalling: from development to cancer.</title>
        <authorList>
            <person name="Turner N."/>
            <person name="Grose R."/>
        </authorList>
    </citation>
    <scope>REVIEW</scope>
</reference>